<feature type="chain" id="PRO_0000303339" description="tRNA N6-adenosine threonylcarbamoyltransferase">
    <location>
        <begin position="1"/>
        <end position="344"/>
    </location>
</feature>
<feature type="region of interest" description="Disordered" evidence="2">
    <location>
        <begin position="325"/>
        <end position="344"/>
    </location>
</feature>
<feature type="compositionally biased region" description="Polar residues" evidence="2">
    <location>
        <begin position="326"/>
        <end position="344"/>
    </location>
</feature>
<feature type="binding site" evidence="1">
    <location>
        <position position="113"/>
    </location>
    <ligand>
        <name>Fe cation</name>
        <dbReference type="ChEBI" id="CHEBI:24875"/>
    </ligand>
</feature>
<feature type="binding site" evidence="1">
    <location>
        <position position="117"/>
    </location>
    <ligand>
        <name>Fe cation</name>
        <dbReference type="ChEBI" id="CHEBI:24875"/>
    </ligand>
</feature>
<feature type="binding site" evidence="1">
    <location>
        <begin position="135"/>
        <end position="139"/>
    </location>
    <ligand>
        <name>substrate</name>
    </ligand>
</feature>
<feature type="binding site" evidence="1">
    <location>
        <position position="169"/>
    </location>
    <ligand>
        <name>substrate</name>
    </ligand>
</feature>
<feature type="binding site" evidence="1">
    <location>
        <position position="182"/>
    </location>
    <ligand>
        <name>substrate</name>
    </ligand>
</feature>
<feature type="binding site" evidence="1">
    <location>
        <position position="186"/>
    </location>
    <ligand>
        <name>substrate</name>
    </ligand>
</feature>
<feature type="binding site" evidence="1">
    <location>
        <position position="278"/>
    </location>
    <ligand>
        <name>substrate</name>
    </ligand>
</feature>
<feature type="binding site" evidence="1">
    <location>
        <position position="306"/>
    </location>
    <ligand>
        <name>Fe cation</name>
        <dbReference type="ChEBI" id="CHEBI:24875"/>
    </ligand>
</feature>
<proteinExistence type="inferred from homology"/>
<evidence type="ECO:0000255" key="1">
    <source>
        <dbReference type="HAMAP-Rule" id="MF_01445"/>
    </source>
</evidence>
<evidence type="ECO:0000256" key="2">
    <source>
        <dbReference type="SAM" id="MobiDB-lite"/>
    </source>
</evidence>
<organism>
    <name type="scientific">Corynebacterium glutamicum (strain R)</name>
    <dbReference type="NCBI Taxonomy" id="340322"/>
    <lineage>
        <taxon>Bacteria</taxon>
        <taxon>Bacillati</taxon>
        <taxon>Actinomycetota</taxon>
        <taxon>Actinomycetes</taxon>
        <taxon>Mycobacteriales</taxon>
        <taxon>Corynebacteriaceae</taxon>
        <taxon>Corynebacterium</taxon>
    </lineage>
</organism>
<reference key="1">
    <citation type="journal article" date="2007" name="Microbiology">
        <title>Comparative analysis of the Corynebacterium glutamicum group and complete genome sequence of strain R.</title>
        <authorList>
            <person name="Yukawa H."/>
            <person name="Omumasaba C.A."/>
            <person name="Nonaka H."/>
            <person name="Kos P."/>
            <person name="Okai N."/>
            <person name="Suzuki N."/>
            <person name="Suda M."/>
            <person name="Tsuge Y."/>
            <person name="Watanabe J."/>
            <person name="Ikeda Y."/>
            <person name="Vertes A.A."/>
            <person name="Inui M."/>
        </authorList>
    </citation>
    <scope>NUCLEOTIDE SEQUENCE [LARGE SCALE GENOMIC DNA]</scope>
    <source>
        <strain>R</strain>
    </source>
</reference>
<name>TSAD_CORGB</name>
<dbReference type="EC" id="2.3.1.234" evidence="1"/>
<dbReference type="EMBL" id="AP009044">
    <property type="protein sequence ID" value="BAF53683.1"/>
    <property type="molecule type" value="Genomic_DNA"/>
</dbReference>
<dbReference type="RefSeq" id="WP_011896813.1">
    <property type="nucleotide sequence ID" value="NC_009342.1"/>
</dbReference>
<dbReference type="SMR" id="A4QBT6"/>
<dbReference type="KEGG" id="cgt:cgR_0712"/>
<dbReference type="HOGENOM" id="CLU_023208_0_2_11"/>
<dbReference type="PhylomeDB" id="A4QBT6"/>
<dbReference type="Proteomes" id="UP000006698">
    <property type="component" value="Chromosome"/>
</dbReference>
<dbReference type="GO" id="GO:0005737">
    <property type="term" value="C:cytoplasm"/>
    <property type="evidence" value="ECO:0007669"/>
    <property type="project" value="UniProtKB-SubCell"/>
</dbReference>
<dbReference type="GO" id="GO:0005506">
    <property type="term" value="F:iron ion binding"/>
    <property type="evidence" value="ECO:0007669"/>
    <property type="project" value="UniProtKB-UniRule"/>
</dbReference>
<dbReference type="GO" id="GO:0061711">
    <property type="term" value="F:N(6)-L-threonylcarbamoyladenine synthase activity"/>
    <property type="evidence" value="ECO:0007669"/>
    <property type="project" value="UniProtKB-EC"/>
</dbReference>
<dbReference type="GO" id="GO:0002949">
    <property type="term" value="P:tRNA threonylcarbamoyladenosine modification"/>
    <property type="evidence" value="ECO:0007669"/>
    <property type="project" value="UniProtKB-UniRule"/>
</dbReference>
<dbReference type="CDD" id="cd24133">
    <property type="entry name" value="ASKHA_NBD_TsaD_bac"/>
    <property type="match status" value="1"/>
</dbReference>
<dbReference type="FunFam" id="3.30.420.40:FF:000012">
    <property type="entry name" value="tRNA N6-adenosine threonylcarbamoyltransferase"/>
    <property type="match status" value="1"/>
</dbReference>
<dbReference type="FunFam" id="3.30.420.40:FF:000040">
    <property type="entry name" value="tRNA N6-adenosine threonylcarbamoyltransferase"/>
    <property type="match status" value="1"/>
</dbReference>
<dbReference type="Gene3D" id="3.30.420.40">
    <property type="match status" value="2"/>
</dbReference>
<dbReference type="HAMAP" id="MF_01445">
    <property type="entry name" value="TsaD"/>
    <property type="match status" value="1"/>
</dbReference>
<dbReference type="InterPro" id="IPR043129">
    <property type="entry name" value="ATPase_NBD"/>
</dbReference>
<dbReference type="InterPro" id="IPR000905">
    <property type="entry name" value="Gcp-like_dom"/>
</dbReference>
<dbReference type="InterPro" id="IPR017861">
    <property type="entry name" value="KAE1/TsaD"/>
</dbReference>
<dbReference type="InterPro" id="IPR017860">
    <property type="entry name" value="Peptidase_M22_CS"/>
</dbReference>
<dbReference type="InterPro" id="IPR022450">
    <property type="entry name" value="TsaD"/>
</dbReference>
<dbReference type="NCBIfam" id="TIGR00329">
    <property type="entry name" value="gcp_kae1"/>
    <property type="match status" value="1"/>
</dbReference>
<dbReference type="NCBIfam" id="TIGR03723">
    <property type="entry name" value="T6A_TsaD_YgjD"/>
    <property type="match status" value="1"/>
</dbReference>
<dbReference type="PANTHER" id="PTHR11735">
    <property type="entry name" value="TRNA N6-ADENOSINE THREONYLCARBAMOYLTRANSFERASE"/>
    <property type="match status" value="1"/>
</dbReference>
<dbReference type="PANTHER" id="PTHR11735:SF6">
    <property type="entry name" value="TRNA N6-ADENOSINE THREONYLCARBAMOYLTRANSFERASE, MITOCHONDRIAL"/>
    <property type="match status" value="1"/>
</dbReference>
<dbReference type="Pfam" id="PF00814">
    <property type="entry name" value="TsaD"/>
    <property type="match status" value="1"/>
</dbReference>
<dbReference type="PRINTS" id="PR00789">
    <property type="entry name" value="OSIALOPTASE"/>
</dbReference>
<dbReference type="SUPFAM" id="SSF53067">
    <property type="entry name" value="Actin-like ATPase domain"/>
    <property type="match status" value="1"/>
</dbReference>
<dbReference type="PROSITE" id="PS01016">
    <property type="entry name" value="GLYCOPROTEASE"/>
    <property type="match status" value="1"/>
</dbReference>
<comment type="function">
    <text evidence="1">Required for the formation of a threonylcarbamoyl group on adenosine at position 37 (t(6)A37) in tRNAs that read codons beginning with adenine. Is involved in the transfer of the threonylcarbamoyl moiety of threonylcarbamoyl-AMP (TC-AMP) to the N6 group of A37, together with TsaE and TsaB. TsaD likely plays a direct catalytic role in this reaction.</text>
</comment>
<comment type="catalytic activity">
    <reaction evidence="1">
        <text>L-threonylcarbamoyladenylate + adenosine(37) in tRNA = N(6)-L-threonylcarbamoyladenosine(37) in tRNA + AMP + H(+)</text>
        <dbReference type="Rhea" id="RHEA:37059"/>
        <dbReference type="Rhea" id="RHEA-COMP:10162"/>
        <dbReference type="Rhea" id="RHEA-COMP:10163"/>
        <dbReference type="ChEBI" id="CHEBI:15378"/>
        <dbReference type="ChEBI" id="CHEBI:73682"/>
        <dbReference type="ChEBI" id="CHEBI:74411"/>
        <dbReference type="ChEBI" id="CHEBI:74418"/>
        <dbReference type="ChEBI" id="CHEBI:456215"/>
        <dbReference type="EC" id="2.3.1.234"/>
    </reaction>
</comment>
<comment type="cofactor">
    <cofactor evidence="1">
        <name>Fe(2+)</name>
        <dbReference type="ChEBI" id="CHEBI:29033"/>
    </cofactor>
    <text evidence="1">Binds 1 Fe(2+) ion per subunit.</text>
</comment>
<comment type="subcellular location">
    <subcellularLocation>
        <location evidence="1">Cytoplasm</location>
    </subcellularLocation>
</comment>
<comment type="similarity">
    <text evidence="1">Belongs to the KAE1 / TsaD family.</text>
</comment>
<sequence>MIVLGIESSCDETGVGVVKLDGEGNLEILADSVASSMQEHARFGGVVPEIASRAHLESMVPVMREALRQAGVDKPDAVAATVGPGLAGALLVGASAAKAYAAAWGVPFYAVNHLGGHVAVANLEGETLPHAVALLVSGGHTQLLEVDAVGLPMKELGSTLDDAAGEAYDKVSRLLGLGYPGGPIIDKLARRGNPEAIAFPRGLMKKSDSRHDFSFSGLKTSVARYVEAAERNGEVISVEDVCASFQEAVCDVLTFKAVRACRDVGAKVLLLGGGVAANSRLRELAQERCDKAGIELRVPRFNLCTDNGVMIAALAAQRIHEGAQESPISVGTDPSLSVETPQVF</sequence>
<gene>
    <name evidence="1" type="primary">tsaD</name>
    <name type="synonym">gcp</name>
    <name type="ordered locus">cgR_0712</name>
</gene>
<accession>A4QBT6</accession>
<keyword id="KW-0012">Acyltransferase</keyword>
<keyword id="KW-0963">Cytoplasm</keyword>
<keyword id="KW-0408">Iron</keyword>
<keyword id="KW-0479">Metal-binding</keyword>
<keyword id="KW-0808">Transferase</keyword>
<keyword id="KW-0819">tRNA processing</keyword>
<protein>
    <recommendedName>
        <fullName evidence="1">tRNA N6-adenosine threonylcarbamoyltransferase</fullName>
        <ecNumber evidence="1">2.3.1.234</ecNumber>
    </recommendedName>
    <alternativeName>
        <fullName evidence="1">N6-L-threonylcarbamoyladenine synthase</fullName>
        <shortName evidence="1">t(6)A synthase</shortName>
    </alternativeName>
    <alternativeName>
        <fullName evidence="1">t(6)A37 threonylcarbamoyladenosine biosynthesis protein TsaD</fullName>
    </alternativeName>
    <alternativeName>
        <fullName evidence="1">tRNA threonylcarbamoyladenosine biosynthesis protein TsaD</fullName>
    </alternativeName>
</protein>